<keyword id="KW-1185">Reference proteome</keyword>
<keyword id="KW-0687">Ribonucleoprotein</keyword>
<keyword id="KW-0689">Ribosomal protein</keyword>
<reference key="1">
    <citation type="journal article" date="2005" name="J. Bacteriol.">
        <title>Complete genome sequence and analysis of the multiresistant nosocomial pathogen Corynebacterium jeikeium K411, a lipid-requiring bacterium of the human skin flora.</title>
        <authorList>
            <person name="Tauch A."/>
            <person name="Kaiser O."/>
            <person name="Hain T."/>
            <person name="Goesmann A."/>
            <person name="Weisshaar B."/>
            <person name="Albersmeier A."/>
            <person name="Bekel T."/>
            <person name="Bischoff N."/>
            <person name="Brune I."/>
            <person name="Chakraborty T."/>
            <person name="Kalinowski J."/>
            <person name="Meyer F."/>
            <person name="Rupp O."/>
            <person name="Schneiker S."/>
            <person name="Viehoever P."/>
            <person name="Puehler A."/>
        </authorList>
    </citation>
    <scope>NUCLEOTIDE SEQUENCE [LARGE SCALE GENOMIC DNA]</scope>
    <source>
        <strain>K411</strain>
    </source>
</reference>
<proteinExistence type="inferred from homology"/>
<name>RL19_CORJK</name>
<sequence>MHILDKVDAAQLRDDIPEFRAGDTLDVHVKVIEGSKSRLQVFRGVVIRRQNSGIRETFTIRKVSFGIGVERTFPVHSPNIDRIDVLSRGKVRRAKLYYLRERRGKAARIKERI</sequence>
<evidence type="ECO:0000255" key="1">
    <source>
        <dbReference type="HAMAP-Rule" id="MF_00402"/>
    </source>
</evidence>
<evidence type="ECO:0000305" key="2"/>
<gene>
    <name evidence="1" type="primary">rplS</name>
    <name type="ordered locus">jk1184</name>
</gene>
<comment type="function">
    <text evidence="1">This protein is located at the 30S-50S ribosomal subunit interface and may play a role in the structure and function of the aminoacyl-tRNA binding site.</text>
</comment>
<comment type="similarity">
    <text evidence="1">Belongs to the bacterial ribosomal protein bL19 family.</text>
</comment>
<dbReference type="EMBL" id="CR931997">
    <property type="protein sequence ID" value="CAI37348.1"/>
    <property type="molecule type" value="Genomic_DNA"/>
</dbReference>
<dbReference type="RefSeq" id="WP_005295302.1">
    <property type="nucleotide sequence ID" value="NC_007164.1"/>
</dbReference>
<dbReference type="SMR" id="Q4JV09"/>
<dbReference type="STRING" id="306537.jk1184"/>
<dbReference type="GeneID" id="92738703"/>
<dbReference type="KEGG" id="cjk:jk1184"/>
<dbReference type="eggNOG" id="COG0335">
    <property type="taxonomic scope" value="Bacteria"/>
</dbReference>
<dbReference type="HOGENOM" id="CLU_103507_2_2_11"/>
<dbReference type="OrthoDB" id="9803541at2"/>
<dbReference type="Proteomes" id="UP000000545">
    <property type="component" value="Chromosome"/>
</dbReference>
<dbReference type="GO" id="GO:0022625">
    <property type="term" value="C:cytosolic large ribosomal subunit"/>
    <property type="evidence" value="ECO:0007669"/>
    <property type="project" value="TreeGrafter"/>
</dbReference>
<dbReference type="GO" id="GO:0003735">
    <property type="term" value="F:structural constituent of ribosome"/>
    <property type="evidence" value="ECO:0007669"/>
    <property type="project" value="InterPro"/>
</dbReference>
<dbReference type="GO" id="GO:0006412">
    <property type="term" value="P:translation"/>
    <property type="evidence" value="ECO:0007669"/>
    <property type="project" value="UniProtKB-UniRule"/>
</dbReference>
<dbReference type="FunFam" id="2.30.30.790:FF:000001">
    <property type="entry name" value="50S ribosomal protein L19"/>
    <property type="match status" value="1"/>
</dbReference>
<dbReference type="Gene3D" id="2.30.30.790">
    <property type="match status" value="1"/>
</dbReference>
<dbReference type="HAMAP" id="MF_00402">
    <property type="entry name" value="Ribosomal_bL19"/>
    <property type="match status" value="1"/>
</dbReference>
<dbReference type="InterPro" id="IPR001857">
    <property type="entry name" value="Ribosomal_bL19"/>
</dbReference>
<dbReference type="InterPro" id="IPR018257">
    <property type="entry name" value="Ribosomal_bL19_CS"/>
</dbReference>
<dbReference type="InterPro" id="IPR038657">
    <property type="entry name" value="Ribosomal_bL19_sf"/>
</dbReference>
<dbReference type="InterPro" id="IPR008991">
    <property type="entry name" value="Translation_prot_SH3-like_sf"/>
</dbReference>
<dbReference type="NCBIfam" id="TIGR01024">
    <property type="entry name" value="rplS_bact"/>
    <property type="match status" value="1"/>
</dbReference>
<dbReference type="PANTHER" id="PTHR15680:SF9">
    <property type="entry name" value="LARGE RIBOSOMAL SUBUNIT PROTEIN BL19M"/>
    <property type="match status" value="1"/>
</dbReference>
<dbReference type="PANTHER" id="PTHR15680">
    <property type="entry name" value="RIBOSOMAL PROTEIN L19"/>
    <property type="match status" value="1"/>
</dbReference>
<dbReference type="Pfam" id="PF01245">
    <property type="entry name" value="Ribosomal_L19"/>
    <property type="match status" value="1"/>
</dbReference>
<dbReference type="PIRSF" id="PIRSF002191">
    <property type="entry name" value="Ribosomal_L19"/>
    <property type="match status" value="1"/>
</dbReference>
<dbReference type="PRINTS" id="PR00061">
    <property type="entry name" value="RIBOSOMALL19"/>
</dbReference>
<dbReference type="SUPFAM" id="SSF50104">
    <property type="entry name" value="Translation proteins SH3-like domain"/>
    <property type="match status" value="1"/>
</dbReference>
<dbReference type="PROSITE" id="PS01015">
    <property type="entry name" value="RIBOSOMAL_L19"/>
    <property type="match status" value="1"/>
</dbReference>
<feature type="chain" id="PRO_0000226841" description="Large ribosomal subunit protein bL19">
    <location>
        <begin position="1"/>
        <end position="113"/>
    </location>
</feature>
<organism>
    <name type="scientific">Corynebacterium jeikeium (strain K411)</name>
    <dbReference type="NCBI Taxonomy" id="306537"/>
    <lineage>
        <taxon>Bacteria</taxon>
        <taxon>Bacillati</taxon>
        <taxon>Actinomycetota</taxon>
        <taxon>Actinomycetes</taxon>
        <taxon>Mycobacteriales</taxon>
        <taxon>Corynebacteriaceae</taxon>
        <taxon>Corynebacterium</taxon>
    </lineage>
</organism>
<accession>Q4JV09</accession>
<protein>
    <recommendedName>
        <fullName evidence="1">Large ribosomal subunit protein bL19</fullName>
    </recommendedName>
    <alternativeName>
        <fullName evidence="2">50S ribosomal protein L19</fullName>
    </alternativeName>
</protein>